<reference key="1">
    <citation type="submission" date="2004-11" db="EMBL/GenBank/DDBJ databases">
        <authorList>
            <consortium name="The German cDNA consortium"/>
        </authorList>
    </citation>
    <scope>NUCLEOTIDE SEQUENCE [LARGE SCALE MRNA]</scope>
    <source>
        <tissue>Brain cortex</tissue>
    </source>
</reference>
<keyword id="KW-0963">Cytoplasm</keyword>
<keyword id="KW-0206">Cytoskeleton</keyword>
<keyword id="KW-0472">Membrane</keyword>
<keyword id="KW-0597">Phosphoprotein</keyword>
<keyword id="KW-1185">Reference proteome</keyword>
<keyword id="KW-0677">Repeat</keyword>
<keyword id="KW-0853">WD repeat</keyword>
<organism>
    <name type="scientific">Pongo abelii</name>
    <name type="common">Sumatran orangutan</name>
    <name type="synonym">Pongo pygmaeus abelii</name>
    <dbReference type="NCBI Taxonomy" id="9601"/>
    <lineage>
        <taxon>Eukaryota</taxon>
        <taxon>Metazoa</taxon>
        <taxon>Chordata</taxon>
        <taxon>Craniata</taxon>
        <taxon>Vertebrata</taxon>
        <taxon>Euteleostomi</taxon>
        <taxon>Mammalia</taxon>
        <taxon>Eutheria</taxon>
        <taxon>Euarchontoglires</taxon>
        <taxon>Primates</taxon>
        <taxon>Haplorrhini</taxon>
        <taxon>Catarrhini</taxon>
        <taxon>Hominidae</taxon>
        <taxon>Pongo</taxon>
    </lineage>
</organism>
<gene>
    <name type="primary">PPP2R2B</name>
</gene>
<accession>Q5R4A2</accession>
<evidence type="ECO:0000250" key="1"/>
<evidence type="ECO:0000250" key="2">
    <source>
        <dbReference type="UniProtKB" id="P36877"/>
    </source>
</evidence>
<evidence type="ECO:0000250" key="3">
    <source>
        <dbReference type="UniProtKB" id="Q00005"/>
    </source>
</evidence>
<evidence type="ECO:0000305" key="4"/>
<name>2ABB_PONAB</name>
<dbReference type="EMBL" id="CR861353">
    <property type="protein sequence ID" value="CAH93414.1"/>
    <property type="molecule type" value="mRNA"/>
</dbReference>
<dbReference type="RefSeq" id="NP_001259029.1">
    <property type="nucleotide sequence ID" value="NM_001272100.1"/>
</dbReference>
<dbReference type="RefSeq" id="XP_063580006.1">
    <property type="nucleotide sequence ID" value="XM_063723936.1"/>
</dbReference>
<dbReference type="RefSeq" id="XP_063580007.1">
    <property type="nucleotide sequence ID" value="XM_063723937.1"/>
</dbReference>
<dbReference type="SMR" id="Q5R4A2"/>
<dbReference type="FunCoup" id="Q5R4A2">
    <property type="interactions" value="2023"/>
</dbReference>
<dbReference type="STRING" id="9601.ENSPPYP00000017801"/>
<dbReference type="GeneID" id="100174027"/>
<dbReference type="KEGG" id="pon:100174027"/>
<dbReference type="CTD" id="5521"/>
<dbReference type="eggNOG" id="KOG1354">
    <property type="taxonomic scope" value="Eukaryota"/>
</dbReference>
<dbReference type="HOGENOM" id="CLU_021713_2_0_1"/>
<dbReference type="InParanoid" id="Q5R4A2"/>
<dbReference type="OrthoDB" id="6274823at2759"/>
<dbReference type="Proteomes" id="UP000001595">
    <property type="component" value="Unplaced"/>
</dbReference>
<dbReference type="GO" id="GO:0005737">
    <property type="term" value="C:cytoplasm"/>
    <property type="evidence" value="ECO:0007669"/>
    <property type="project" value="UniProtKB-SubCell"/>
</dbReference>
<dbReference type="GO" id="GO:0005856">
    <property type="term" value="C:cytoskeleton"/>
    <property type="evidence" value="ECO:0007669"/>
    <property type="project" value="UniProtKB-SubCell"/>
</dbReference>
<dbReference type="GO" id="GO:0016020">
    <property type="term" value="C:membrane"/>
    <property type="evidence" value="ECO:0007669"/>
    <property type="project" value="UniProtKB-SubCell"/>
</dbReference>
<dbReference type="GO" id="GO:0000159">
    <property type="term" value="C:protein phosphatase type 2A complex"/>
    <property type="evidence" value="ECO:0007669"/>
    <property type="project" value="InterPro"/>
</dbReference>
<dbReference type="GO" id="GO:0019888">
    <property type="term" value="F:protein phosphatase regulator activity"/>
    <property type="evidence" value="ECO:0007669"/>
    <property type="project" value="InterPro"/>
</dbReference>
<dbReference type="FunFam" id="2.130.10.10:FF:000002">
    <property type="entry name" value="Serine/threonine-protein phosphatase 2A 55 kDa regulatory subunit B"/>
    <property type="match status" value="1"/>
</dbReference>
<dbReference type="Gene3D" id="2.130.10.10">
    <property type="entry name" value="YVTN repeat-like/Quinoprotein amine dehydrogenase"/>
    <property type="match status" value="1"/>
</dbReference>
<dbReference type="InterPro" id="IPR000009">
    <property type="entry name" value="PP2A_PR55"/>
</dbReference>
<dbReference type="InterPro" id="IPR018067">
    <property type="entry name" value="PP2A_PR55_CS"/>
</dbReference>
<dbReference type="InterPro" id="IPR015943">
    <property type="entry name" value="WD40/YVTN_repeat-like_dom_sf"/>
</dbReference>
<dbReference type="InterPro" id="IPR036322">
    <property type="entry name" value="WD40_repeat_dom_sf"/>
</dbReference>
<dbReference type="InterPro" id="IPR001680">
    <property type="entry name" value="WD40_rpt"/>
</dbReference>
<dbReference type="PANTHER" id="PTHR11871">
    <property type="entry name" value="PROTEIN PHOSPHATASE PP2A REGULATORY SUBUNIT B"/>
    <property type="match status" value="1"/>
</dbReference>
<dbReference type="PIRSF" id="PIRSF037309">
    <property type="entry name" value="PP2A_PR55"/>
    <property type="match status" value="1"/>
</dbReference>
<dbReference type="PRINTS" id="PR00600">
    <property type="entry name" value="PP2APR55"/>
</dbReference>
<dbReference type="SMART" id="SM00320">
    <property type="entry name" value="WD40"/>
    <property type="match status" value="6"/>
</dbReference>
<dbReference type="SUPFAM" id="SSF50978">
    <property type="entry name" value="WD40 repeat-like"/>
    <property type="match status" value="1"/>
</dbReference>
<dbReference type="PROSITE" id="PS01024">
    <property type="entry name" value="PR55_1"/>
    <property type="match status" value="1"/>
</dbReference>
<dbReference type="PROSITE" id="PS01025">
    <property type="entry name" value="PR55_2"/>
    <property type="match status" value="1"/>
</dbReference>
<dbReference type="PROSITE" id="PS00678">
    <property type="entry name" value="WD_REPEATS_1"/>
    <property type="match status" value="1"/>
</dbReference>
<comment type="function">
    <text evidence="1">The B regulatory subunit might modulate substrate selectivity and catalytic activity, and might also direct the localization of the catalytic enzyme to a particular subcellular compartment.</text>
</comment>
<comment type="subunit">
    <text evidence="1 2 3">PP2A consists of a common heterodimeric core enzyme, composed of a 36 kDa catalytic subunit (subunit C) and a 65 kDa constant regulatory subunit (PR65 or subunit A), that associates with a variety of regulatory subunits. Proteins that associate with the core dimer include three families of regulatory subunits B (the R2/B/PR55/B55, R3/B''/PR72/PR130/PR59 and R5/B'/B56 families), the 48 kDa variable regulatory subunit, viral proteins, and cell signaling molecules (By similarity). Interacts with TOMM22 (By similarity). Interacts with IER5 (via N- and C-terminal regions) (By similarity).</text>
</comment>
<comment type="subcellular location">
    <subcellularLocation>
        <location evidence="1">Cytoplasm</location>
    </subcellularLocation>
    <subcellularLocation>
        <location evidence="1">Cytoplasm</location>
        <location evidence="1">Cytoskeleton</location>
    </subcellularLocation>
    <subcellularLocation>
        <location evidence="1">Membrane</location>
    </subcellularLocation>
</comment>
<comment type="similarity">
    <text evidence="4">Belongs to the phosphatase 2A regulatory subunit B family.</text>
</comment>
<sequence length="443" mass="51710">MEEDIDTRKINNSFLRDHSYATEADIISTVEFNHTGELLATGDKGGRVVIFQREQESKNQVHRRGEYNVYSTFQSHEPEFDYLKSLEIEEKINKIRWLPQQNAAYFLLSTNDKTVKLWKVSERDKRPEGYNLKDEEGRLRDPATITTLRVPVLRPMDLMVEATPRRVFANAHTYHINSISVNSDYETYMSADDLRINLWNFEITNQSFNIVDIKPANMEELTEVITAAEFHPHHCNTFVYSSSKGTIRLCDMRASALCDRHTKFFEEPEDPSNRSFFSEIISSISDVKFSHSGRYIMTRDYLTVKVWDLNMENRPIETYQVHDYLRSKLCSLYENDCIFDKFECVWNGSDSVIMTGSYNNFFRMFDRNTKRDVTLEASRENSKPRAILKPRKVCVGGKRRKDEISVDSLDFSKKILHTAWHPSENIIAVAATNNLYIFQDKVN</sequence>
<feature type="chain" id="PRO_0000071425" description="Serine/threonine-protein phosphatase 2A 55 kDa regulatory subunit B beta isoform">
    <location>
        <begin position="1"/>
        <end position="443"/>
    </location>
</feature>
<feature type="repeat" description="WD 1">
    <location>
        <begin position="22"/>
        <end position="61"/>
    </location>
</feature>
<feature type="repeat" description="WD 2">
    <location>
        <begin position="87"/>
        <end position="128"/>
    </location>
</feature>
<feature type="repeat" description="WD 3">
    <location>
        <begin position="171"/>
        <end position="209"/>
    </location>
</feature>
<feature type="repeat" description="WD 4">
    <location>
        <begin position="220"/>
        <end position="260"/>
    </location>
</feature>
<feature type="repeat" description="WD 5">
    <location>
        <begin position="279"/>
        <end position="317"/>
    </location>
</feature>
<feature type="repeat" description="WD 6">
    <location>
        <begin position="334"/>
        <end position="375"/>
    </location>
</feature>
<feature type="repeat" description="WD 7">
    <location>
        <begin position="410"/>
        <end position="442"/>
    </location>
</feature>
<feature type="modified residue" description="Phosphoserine" evidence="2">
    <location>
        <position position="275"/>
    </location>
</feature>
<feature type="modified residue" description="Phosphotyrosine" evidence="2">
    <location>
        <position position="295"/>
    </location>
</feature>
<feature type="modified residue" description="Phosphothreonine" evidence="2">
    <location>
        <position position="298"/>
    </location>
</feature>
<protein>
    <recommendedName>
        <fullName>Serine/threonine-protein phosphatase 2A 55 kDa regulatory subunit B beta isoform</fullName>
    </recommendedName>
    <alternativeName>
        <fullName>PP2A subunit B isoform B55-beta</fullName>
    </alternativeName>
    <alternativeName>
        <fullName>PP2A subunit B isoform PR55-beta</fullName>
    </alternativeName>
    <alternativeName>
        <fullName>PP2A subunit B isoform R2-beta</fullName>
    </alternativeName>
    <alternativeName>
        <fullName>PP2A subunit B isoform beta</fullName>
    </alternativeName>
</protein>
<proteinExistence type="evidence at transcript level"/>